<sequence>MPRLAFLLRPGWLALALVVVAFTYLCFTVLAPWQLGKNAKTSRENQQIRYSLDTPPVPLKTLLPQQDSSAPDAQWRRVTATGQYLPDVQVLARLRVVEGDQAFEVLAPFVVDGGPTVLVDRGYVRPQVGSHVPPIPRLPVQTVTITARLRDSEPSVAGKDPFVRDGFQQVYSINTGQVAALTGVQLAGSYLQLIEDQPGGLGVLGVPHLDPGPFLSYGIQWISFGILAPIGLGYFAYAEIRARRREKAGSPPPDKPMTVEQKLADRYGRRR</sequence>
<name>Y2235_MYCTU</name>
<protein>
    <recommendedName>
        <fullName>Uncharacterized SURF1-like protein Rv2235</fullName>
    </recommendedName>
</protein>
<reference key="1">
    <citation type="journal article" date="1998" name="Nature">
        <title>Deciphering the biology of Mycobacterium tuberculosis from the complete genome sequence.</title>
        <authorList>
            <person name="Cole S.T."/>
            <person name="Brosch R."/>
            <person name="Parkhill J."/>
            <person name="Garnier T."/>
            <person name="Churcher C.M."/>
            <person name="Harris D.E."/>
            <person name="Gordon S.V."/>
            <person name="Eiglmeier K."/>
            <person name="Gas S."/>
            <person name="Barry C.E. III"/>
            <person name="Tekaia F."/>
            <person name="Badcock K."/>
            <person name="Basham D."/>
            <person name="Brown D."/>
            <person name="Chillingworth T."/>
            <person name="Connor R."/>
            <person name="Davies R.M."/>
            <person name="Devlin K."/>
            <person name="Feltwell T."/>
            <person name="Gentles S."/>
            <person name="Hamlin N."/>
            <person name="Holroyd S."/>
            <person name="Hornsby T."/>
            <person name="Jagels K."/>
            <person name="Krogh A."/>
            <person name="McLean J."/>
            <person name="Moule S."/>
            <person name="Murphy L.D."/>
            <person name="Oliver S."/>
            <person name="Osborne J."/>
            <person name="Quail M.A."/>
            <person name="Rajandream M.A."/>
            <person name="Rogers J."/>
            <person name="Rutter S."/>
            <person name="Seeger K."/>
            <person name="Skelton S."/>
            <person name="Squares S."/>
            <person name="Squares R."/>
            <person name="Sulston J.E."/>
            <person name="Taylor K."/>
            <person name="Whitehead S."/>
            <person name="Barrell B.G."/>
        </authorList>
    </citation>
    <scope>NUCLEOTIDE SEQUENCE [LARGE SCALE GENOMIC DNA]</scope>
    <source>
        <strain>ATCC 25618 / H37Rv</strain>
    </source>
</reference>
<reference key="2">
    <citation type="journal article" date="2011" name="Mol. Cell. Proteomics">
        <title>Proteogenomic analysis of Mycobacterium tuberculosis by high resolution mass spectrometry.</title>
        <authorList>
            <person name="Kelkar D.S."/>
            <person name="Kumar D."/>
            <person name="Kumar P."/>
            <person name="Balakrishnan L."/>
            <person name="Muthusamy B."/>
            <person name="Yadav A.K."/>
            <person name="Shrivastava P."/>
            <person name="Marimuthu A."/>
            <person name="Anand S."/>
            <person name="Sundaram H."/>
            <person name="Kingsbury R."/>
            <person name="Harsha H.C."/>
            <person name="Nair B."/>
            <person name="Prasad T.S."/>
            <person name="Chauhan D.S."/>
            <person name="Katoch K."/>
            <person name="Katoch V.M."/>
            <person name="Kumar P."/>
            <person name="Chaerkady R."/>
            <person name="Ramachandran S."/>
            <person name="Dash D."/>
            <person name="Pandey A."/>
        </authorList>
    </citation>
    <scope>IDENTIFICATION BY MASS SPECTROMETRY [LARGE SCALE ANALYSIS]</scope>
    <source>
        <strain>ATCC 25618 / H37Rv</strain>
    </source>
</reference>
<organism>
    <name type="scientific">Mycobacterium tuberculosis (strain ATCC 25618 / H37Rv)</name>
    <dbReference type="NCBI Taxonomy" id="83332"/>
    <lineage>
        <taxon>Bacteria</taxon>
        <taxon>Bacillati</taxon>
        <taxon>Actinomycetota</taxon>
        <taxon>Actinomycetes</taxon>
        <taxon>Mycobacteriales</taxon>
        <taxon>Mycobacteriaceae</taxon>
        <taxon>Mycobacterium</taxon>
        <taxon>Mycobacterium tuberculosis complex</taxon>
    </lineage>
</organism>
<accession>P9WGA7</accession>
<accession>L0T907</accession>
<accession>P66883</accession>
<accession>Q10517</accession>
<comment type="subcellular location">
    <subcellularLocation>
        <location evidence="3">Cell membrane</location>
        <topology evidence="3">Multi-pass membrane protein</topology>
    </subcellularLocation>
</comment>
<comment type="similarity">
    <text evidence="3">Belongs to the SURF1 family.</text>
</comment>
<proteinExistence type="evidence at protein level"/>
<gene>
    <name type="ordered locus">Rv2235</name>
    <name type="ORF">MTCY427.16</name>
</gene>
<feature type="chain" id="PRO_0000215662" description="Uncharacterized SURF1-like protein Rv2235">
    <location>
        <begin position="1"/>
        <end position="271"/>
    </location>
</feature>
<feature type="transmembrane region" description="Helical" evidence="1">
    <location>
        <begin position="11"/>
        <end position="33"/>
    </location>
</feature>
<feature type="transmembrane region" description="Helical" evidence="1">
    <location>
        <begin position="172"/>
        <end position="194"/>
    </location>
</feature>
<feature type="transmembrane region" description="Helical" evidence="1">
    <location>
        <begin position="214"/>
        <end position="236"/>
    </location>
</feature>
<feature type="region of interest" description="Disordered" evidence="2">
    <location>
        <begin position="245"/>
        <end position="271"/>
    </location>
</feature>
<feature type="compositionally biased region" description="Basic and acidic residues" evidence="2">
    <location>
        <begin position="262"/>
        <end position="271"/>
    </location>
</feature>
<evidence type="ECO:0000255" key="1"/>
<evidence type="ECO:0000256" key="2">
    <source>
        <dbReference type="SAM" id="MobiDB-lite"/>
    </source>
</evidence>
<evidence type="ECO:0000305" key="3"/>
<dbReference type="EMBL" id="AL123456">
    <property type="protein sequence ID" value="CCP45014.1"/>
    <property type="molecule type" value="Genomic_DNA"/>
</dbReference>
<dbReference type="PIR" id="G70777">
    <property type="entry name" value="G70777"/>
</dbReference>
<dbReference type="RefSeq" id="NP_216751.1">
    <property type="nucleotide sequence ID" value="NC_000962.3"/>
</dbReference>
<dbReference type="RefSeq" id="WP_003411514.1">
    <property type="nucleotide sequence ID" value="NZ_NVQJ01000008.1"/>
</dbReference>
<dbReference type="STRING" id="83332.Rv2235"/>
<dbReference type="PaxDb" id="83332-Rv2235"/>
<dbReference type="DNASU" id="887606"/>
<dbReference type="GeneID" id="887606"/>
<dbReference type="KEGG" id="mtu:Rv2235"/>
<dbReference type="KEGG" id="mtv:RVBD_2235"/>
<dbReference type="TubercuList" id="Rv2235"/>
<dbReference type="eggNOG" id="COG3346">
    <property type="taxonomic scope" value="Bacteria"/>
</dbReference>
<dbReference type="InParanoid" id="P9WGA7"/>
<dbReference type="OrthoDB" id="9807214at2"/>
<dbReference type="PhylomeDB" id="P9WGA7"/>
<dbReference type="Proteomes" id="UP000001584">
    <property type="component" value="Chromosome"/>
</dbReference>
<dbReference type="GO" id="GO:0009274">
    <property type="term" value="C:peptidoglycan-based cell wall"/>
    <property type="evidence" value="ECO:0007005"/>
    <property type="project" value="MTBBASE"/>
</dbReference>
<dbReference type="GO" id="GO:0005886">
    <property type="term" value="C:plasma membrane"/>
    <property type="evidence" value="ECO:0007669"/>
    <property type="project" value="UniProtKB-SubCell"/>
</dbReference>
<dbReference type="GO" id="GO:0051701">
    <property type="term" value="P:biological process involved in interaction with host"/>
    <property type="evidence" value="ECO:0000315"/>
    <property type="project" value="MTBBASE"/>
</dbReference>
<dbReference type="CDD" id="cd06662">
    <property type="entry name" value="SURF1"/>
    <property type="match status" value="1"/>
</dbReference>
<dbReference type="InterPro" id="IPR002994">
    <property type="entry name" value="Surf1/Shy1"/>
</dbReference>
<dbReference type="InterPro" id="IPR045214">
    <property type="entry name" value="Surf1/Surf4"/>
</dbReference>
<dbReference type="PANTHER" id="PTHR23427">
    <property type="entry name" value="SURFEIT LOCUS PROTEIN"/>
    <property type="match status" value="1"/>
</dbReference>
<dbReference type="PANTHER" id="PTHR23427:SF2">
    <property type="entry name" value="SURFEIT LOCUS PROTEIN 1"/>
    <property type="match status" value="1"/>
</dbReference>
<dbReference type="Pfam" id="PF02104">
    <property type="entry name" value="SURF1"/>
    <property type="match status" value="1"/>
</dbReference>
<dbReference type="PROSITE" id="PS50895">
    <property type="entry name" value="SURF1"/>
    <property type="match status" value="1"/>
</dbReference>
<keyword id="KW-1003">Cell membrane</keyword>
<keyword id="KW-0472">Membrane</keyword>
<keyword id="KW-1185">Reference proteome</keyword>
<keyword id="KW-0812">Transmembrane</keyword>
<keyword id="KW-1133">Transmembrane helix</keyword>